<evidence type="ECO:0000255" key="1">
    <source>
        <dbReference type="PROSITE-ProRule" id="PRU00285"/>
    </source>
</evidence>
<evidence type="ECO:0000305" key="2"/>
<evidence type="ECO:0007829" key="3">
    <source>
        <dbReference type="PDB" id="1GME"/>
    </source>
</evidence>
<gene>
    <name type="primary">hsp16.9B</name>
</gene>
<feature type="chain" id="PRO_0000387466" description="16.9 kDa class I heat shock protein 2">
    <location>
        <begin position="1"/>
        <end position="151"/>
    </location>
</feature>
<feature type="domain" description="sHSP" evidence="1">
    <location>
        <begin position="37"/>
        <end position="151"/>
    </location>
</feature>
<feature type="helix" evidence="3">
    <location>
        <begin position="15"/>
        <end position="17"/>
    </location>
</feature>
<feature type="helix" evidence="3">
    <location>
        <begin position="20"/>
        <end position="27"/>
    </location>
</feature>
<feature type="helix" evidence="3">
    <location>
        <begin position="28"/>
        <end position="30"/>
    </location>
</feature>
<feature type="helix" evidence="3">
    <location>
        <begin position="38"/>
        <end position="41"/>
    </location>
</feature>
<feature type="helix" evidence="3">
    <location>
        <begin position="42"/>
        <end position="44"/>
    </location>
</feature>
<feature type="strand" evidence="3">
    <location>
        <begin position="46"/>
        <end position="50"/>
    </location>
</feature>
<feature type="strand" evidence="3">
    <location>
        <begin position="52"/>
        <end position="60"/>
    </location>
</feature>
<feature type="helix" evidence="3">
    <location>
        <begin position="66"/>
        <end position="68"/>
    </location>
</feature>
<feature type="strand" evidence="3">
    <location>
        <begin position="69"/>
        <end position="74"/>
    </location>
</feature>
<feature type="turn" evidence="3">
    <location>
        <begin position="75"/>
        <end position="77"/>
    </location>
</feature>
<feature type="strand" evidence="3">
    <location>
        <begin position="78"/>
        <end position="83"/>
    </location>
</feature>
<feature type="strand" evidence="3">
    <location>
        <begin position="95"/>
        <end position="98"/>
    </location>
</feature>
<feature type="strand" evidence="3">
    <location>
        <begin position="106"/>
        <end position="111"/>
    </location>
</feature>
<feature type="helix" evidence="3">
    <location>
        <begin position="118"/>
        <end position="120"/>
    </location>
</feature>
<feature type="strand" evidence="3">
    <location>
        <begin position="122"/>
        <end position="126"/>
    </location>
</feature>
<feature type="strand" evidence="3">
    <location>
        <begin position="129"/>
        <end position="135"/>
    </location>
</feature>
<accession>Q41560</accession>
<sequence>MSIVRRTNVFDPFADLWADPFDTFRSIVPAISGGGSETAAFANARMDWKETPEAHVFKADLPGVKKEEVKVEVEDGNVLVVSGERTKEKEDKNDKWHRVERSSGKFVRRFRLLEDAKVEEVKAGLENGVLTVTVPKAEVKKPEVKAIQISG</sequence>
<name>HS16B_WHEAT</name>
<keyword id="KW-0002">3D-structure</keyword>
<keyword id="KW-0963">Cytoplasm</keyword>
<keyword id="KW-1185">Reference proteome</keyword>
<keyword id="KW-0346">Stress response</keyword>
<protein>
    <recommendedName>
        <fullName>16.9 kDa class I heat shock protein 2</fullName>
    </recommendedName>
    <alternativeName>
        <fullName>Heat shock protein 16.9B</fullName>
    </alternativeName>
</protein>
<proteinExistence type="evidence at protein level"/>
<reference key="1">
    <citation type="submission" date="1992-02" db="EMBL/GenBank/DDBJ databases">
        <title>Cloning and characterization of cytoplasmic LMW HSP genes from wheat.</title>
        <authorList>
            <person name="Weng J."/>
            <person name="Wang Z.F."/>
            <person name="Nguyen H.T."/>
        </authorList>
    </citation>
    <scope>NUCLEOTIDE SEQUENCE [MRNA]</scope>
    <source>
        <strain>cv. Mustang</strain>
        <tissue>Seedling</tissue>
    </source>
</reference>
<reference key="2">
    <citation type="journal article" date="2001" name="Nat. Struct. Biol.">
        <title>Crystal structure and assembly of a eukaryotic small heat shock protein.</title>
        <authorList>
            <person name="van Montfort R.L."/>
            <person name="Basha E."/>
            <person name="Friedrich K.L."/>
            <person name="Slingsby C."/>
            <person name="Vierling E."/>
        </authorList>
    </citation>
    <scope>X-RAY CRYSTALLOGRAPHY (2.7 ANGSTROMS)</scope>
    <scope>HOMODODECAMER</scope>
</reference>
<comment type="subunit">
    <text>Homododecamer composed of 2 hexameric rings, each consisting of 3 homodimers.</text>
</comment>
<comment type="subcellular location">
    <subcellularLocation>
        <location evidence="2">Cytoplasm</location>
    </subcellularLocation>
</comment>
<comment type="similarity">
    <text evidence="1">Belongs to the small heat shock protein (HSP20) family.</text>
</comment>
<organism>
    <name type="scientific">Triticum aestivum</name>
    <name type="common">Wheat</name>
    <dbReference type="NCBI Taxonomy" id="4565"/>
    <lineage>
        <taxon>Eukaryota</taxon>
        <taxon>Viridiplantae</taxon>
        <taxon>Streptophyta</taxon>
        <taxon>Embryophyta</taxon>
        <taxon>Tracheophyta</taxon>
        <taxon>Spermatophyta</taxon>
        <taxon>Magnoliopsida</taxon>
        <taxon>Liliopsida</taxon>
        <taxon>Poales</taxon>
        <taxon>Poaceae</taxon>
        <taxon>BOP clade</taxon>
        <taxon>Pooideae</taxon>
        <taxon>Triticodae</taxon>
        <taxon>Triticeae</taxon>
        <taxon>Triticinae</taxon>
        <taxon>Triticum</taxon>
    </lineage>
</organism>
<dbReference type="EMBL" id="X64618">
    <property type="protein sequence ID" value="CAA45902.1"/>
    <property type="molecule type" value="mRNA"/>
</dbReference>
<dbReference type="PIR" id="S21600">
    <property type="entry name" value="S21600"/>
</dbReference>
<dbReference type="PDB" id="1GME">
    <property type="method" value="X-ray"/>
    <property type="resolution" value="2.70 A"/>
    <property type="chains" value="A/B/C/D=1-151"/>
</dbReference>
<dbReference type="PDB" id="2BYU">
    <property type="method" value="EM"/>
    <property type="resolution" value="16.50 A"/>
    <property type="chains" value="A/B/C/D/E/F/G/H/I/J/K/L=43-151"/>
</dbReference>
<dbReference type="PDB" id="2H50">
    <property type="method" value="EM"/>
    <property type="chains" value="A/B/C/D/E/F/G/H/I/J/K/L/M/N/O/P/Q/R/S/T/U/V/W/X=44-136"/>
</dbReference>
<dbReference type="PDB" id="2H53">
    <property type="method" value="EM"/>
    <property type="chains" value="A/B/C/D/E/F/G/H/I/J/K/L/M/N/O/P/Q/R/S/T/U/V/W/X=44-136"/>
</dbReference>
<dbReference type="PDBsum" id="1GME"/>
<dbReference type="PDBsum" id="2BYU"/>
<dbReference type="PDBsum" id="2H50"/>
<dbReference type="PDBsum" id="2H53"/>
<dbReference type="SMR" id="Q41560"/>
<dbReference type="STRING" id="4565.Q41560"/>
<dbReference type="eggNOG" id="KOG0710">
    <property type="taxonomic scope" value="Eukaryota"/>
</dbReference>
<dbReference type="EvolutionaryTrace" id="Q41560"/>
<dbReference type="Proteomes" id="UP000019116">
    <property type="component" value="Unplaced"/>
</dbReference>
<dbReference type="ExpressionAtlas" id="Q41560">
    <property type="expression patterns" value="baseline"/>
</dbReference>
<dbReference type="GO" id="GO:0005737">
    <property type="term" value="C:cytoplasm"/>
    <property type="evidence" value="ECO:0007669"/>
    <property type="project" value="UniProtKB-SubCell"/>
</dbReference>
<dbReference type="GO" id="GO:0051082">
    <property type="term" value="F:unfolded protein binding"/>
    <property type="evidence" value="ECO:0000318"/>
    <property type="project" value="GO_Central"/>
</dbReference>
<dbReference type="GO" id="GO:0051259">
    <property type="term" value="P:protein complex oligomerization"/>
    <property type="evidence" value="ECO:0000318"/>
    <property type="project" value="GO_Central"/>
</dbReference>
<dbReference type="GO" id="GO:0006457">
    <property type="term" value="P:protein folding"/>
    <property type="evidence" value="ECO:0000318"/>
    <property type="project" value="GO_Central"/>
</dbReference>
<dbReference type="GO" id="GO:0051260">
    <property type="term" value="P:protein homooligomerization"/>
    <property type="evidence" value="ECO:0000314"/>
    <property type="project" value="UniProtKB"/>
</dbReference>
<dbReference type="GO" id="GO:0009408">
    <property type="term" value="P:response to heat"/>
    <property type="evidence" value="ECO:0000318"/>
    <property type="project" value="GO_Central"/>
</dbReference>
<dbReference type="GO" id="GO:0042542">
    <property type="term" value="P:response to hydrogen peroxide"/>
    <property type="evidence" value="ECO:0000318"/>
    <property type="project" value="GO_Central"/>
</dbReference>
<dbReference type="GO" id="GO:0009651">
    <property type="term" value="P:response to salt stress"/>
    <property type="evidence" value="ECO:0000318"/>
    <property type="project" value="GO_Central"/>
</dbReference>
<dbReference type="CDD" id="cd06472">
    <property type="entry name" value="ACD_ScHsp26_like"/>
    <property type="match status" value="1"/>
</dbReference>
<dbReference type="FunFam" id="2.60.40.790:FF:000007">
    <property type="entry name" value="17.4 kDa class I heat shock protein"/>
    <property type="match status" value="1"/>
</dbReference>
<dbReference type="Gene3D" id="2.60.40.790">
    <property type="match status" value="1"/>
</dbReference>
<dbReference type="InterPro" id="IPR002068">
    <property type="entry name" value="A-crystallin/Hsp20_dom"/>
</dbReference>
<dbReference type="InterPro" id="IPR008978">
    <property type="entry name" value="HSP20-like_chaperone"/>
</dbReference>
<dbReference type="InterPro" id="IPR031107">
    <property type="entry name" value="Small_HSP"/>
</dbReference>
<dbReference type="PANTHER" id="PTHR11527">
    <property type="entry name" value="HEAT-SHOCK PROTEIN 20 FAMILY MEMBER"/>
    <property type="match status" value="1"/>
</dbReference>
<dbReference type="Pfam" id="PF00011">
    <property type="entry name" value="HSP20"/>
    <property type="match status" value="1"/>
</dbReference>
<dbReference type="SUPFAM" id="SSF49764">
    <property type="entry name" value="HSP20-like chaperones"/>
    <property type="match status" value="1"/>
</dbReference>
<dbReference type="PROSITE" id="PS01031">
    <property type="entry name" value="SHSP"/>
    <property type="match status" value="1"/>
</dbReference>